<reference key="1">
    <citation type="journal article" date="1994" name="Protein Sci.">
        <title>Unique dicistronic operon (ptsI-crr) in Mycoplasma capricolum encoding enzyme I and the glucose-specific enzyme IIA of the phosphoenolpyruvate:sugar phosphotransferase system: cloning, sequencing, promoter analysis, and protein characterization.</title>
        <authorList>
            <person name="Zhu P.-P."/>
            <person name="Reizer J."/>
            <person name="Peterkofsky A."/>
        </authorList>
    </citation>
    <scope>NUCLEOTIDE SEQUENCE [GENOMIC DNA]</scope>
</reference>
<reference key="2">
    <citation type="submission" date="2005-09" db="EMBL/GenBank/DDBJ databases">
        <authorList>
            <person name="Glass J.I."/>
            <person name="Lartigue C."/>
            <person name="Pfannkoch C."/>
            <person name="Baden-Tillson H."/>
            <person name="Smith H.O."/>
            <person name="Venter J.C."/>
            <person name="Roske K."/>
            <person name="Wise K.S."/>
            <person name="Calcutt M.J."/>
            <person name="Nelson W.C."/>
            <person name="Nierman W.C."/>
        </authorList>
    </citation>
    <scope>NUCLEOTIDE SEQUENCE [LARGE SCALE GENOMIC DNA]</scope>
    <source>
        <strain>California kid / ATCC 27343 / NCTC 10154</strain>
    </source>
</reference>
<name>Y231_MYCCT</name>
<sequence>MKRTIKYLSFLGLIPFLSITTISCVKQAKENNNKNQLISQFKQLIFILNSFDLDNKKLESKIIKAIEKSDFNKISNINLELTIKFLTRIKNELETKTISQLNKNDKLDILTKIKVHLGSLNLIELVNIVDELVNKLNQKEEIKNTHKDKIEKNKDNIEDIDDSKLEILESKYIPNQHNYPDYVKNFKTVSAEEIYKELYDRTFSIKFLVKLKDGGLLSNGTGTGWLLDYHKYSNTNKYKMFIATNLHVLADFSNSLTDEQNKEFNYYDPSGNKVIGLGLGKADNVTDFSRKNNNSKSENNIANYYLNNQDFENYLKNDFWSVNKFSKGISEPKIVFGAVDFMKDRAIKNHYEALQKEAINYYNYKKNNNEINDDNKIAWNNFLNNKDIPIMIDFAVFEFDVDLDLVDYNLKSWISNAISGLDNYLDRLNKAPILPNQDKKISKYLQTTDYVSALFKKDKSEQNLYNAKDIYIAGYPTSQYSRSVWMQNNPIERNSSTLTSNWRSPTNDKTFAFANEVEEKAGTGLNFNIHDNYWHRVFATFYGYQYNINFSSLYYGASGSLAYNEFGQMIGIYNNVKSNVEFGDLLQSATIAPFLQSDNIKVGDNIIYAYNLIDGTDKTKYKYQKSSFRENLQKLYPNGFSDGLKSTKLFDDIFN</sequence>
<comment type="subcellular location">
    <subcellularLocation>
        <location evidence="1">Cell membrane</location>
        <topology evidence="1">Lipid-anchor</topology>
    </subcellularLocation>
</comment>
<comment type="similarity">
    <text evidence="2">Belongs to the MG067/MG068/MG395 family.</text>
</comment>
<protein>
    <recommendedName>
        <fullName>Uncharacterized lipoprotein MCAP_0231</fullName>
    </recommendedName>
    <alternativeName>
        <fullName>ORFA</fullName>
    </alternativeName>
</protein>
<proteinExistence type="inferred from homology"/>
<accession>P45615</accession>
<accession>Q2SSP5</accession>
<keyword id="KW-1003">Cell membrane</keyword>
<keyword id="KW-0449">Lipoprotein</keyword>
<keyword id="KW-0472">Membrane</keyword>
<keyword id="KW-0564">Palmitate</keyword>
<keyword id="KW-0732">Signal</keyword>
<feature type="signal peptide" evidence="1">
    <location>
        <begin position="1"/>
        <end position="23"/>
    </location>
</feature>
<feature type="chain" id="PRO_0000018746" description="Uncharacterized lipoprotein MCAP_0231">
    <location>
        <begin position="24"/>
        <end position="655"/>
    </location>
</feature>
<feature type="lipid moiety-binding region" description="N-palmitoyl cysteine" evidence="1">
    <location>
        <position position="24"/>
    </location>
</feature>
<feature type="lipid moiety-binding region" description="S-diacylglycerol cysteine" evidence="1">
    <location>
        <position position="24"/>
    </location>
</feature>
<gene>
    <name type="ordered locus">MCAP_0231</name>
</gene>
<evidence type="ECO:0000255" key="1">
    <source>
        <dbReference type="PROSITE-ProRule" id="PRU00303"/>
    </source>
</evidence>
<evidence type="ECO:0000305" key="2"/>
<organism>
    <name type="scientific">Mycoplasma capricolum subsp. capricolum (strain California kid / ATCC 27343 / NCTC 10154)</name>
    <dbReference type="NCBI Taxonomy" id="340047"/>
    <lineage>
        <taxon>Bacteria</taxon>
        <taxon>Bacillati</taxon>
        <taxon>Mycoplasmatota</taxon>
        <taxon>Mollicutes</taxon>
        <taxon>Mycoplasmataceae</taxon>
        <taxon>Mycoplasma</taxon>
    </lineage>
</organism>
<dbReference type="EMBL" id="U15110">
    <property type="protein sequence ID" value="AAA70404.1"/>
    <property type="molecule type" value="Genomic_DNA"/>
</dbReference>
<dbReference type="EMBL" id="CP000123">
    <property type="protein sequence ID" value="ABC01290.1"/>
    <property type="molecule type" value="Genomic_DNA"/>
</dbReference>
<dbReference type="PIR" id="A57681">
    <property type="entry name" value="A57681"/>
</dbReference>
<dbReference type="RefSeq" id="WP_011387119.1">
    <property type="nucleotide sequence ID" value="NC_007633.1"/>
</dbReference>
<dbReference type="GeneID" id="23778816"/>
<dbReference type="KEGG" id="mcp:MCAP_0231"/>
<dbReference type="HOGENOM" id="CLU_018138_0_0_14"/>
<dbReference type="PhylomeDB" id="P45615"/>
<dbReference type="Proteomes" id="UP000001928">
    <property type="component" value="Chromosome"/>
</dbReference>
<dbReference type="GO" id="GO:0005886">
    <property type="term" value="C:plasma membrane"/>
    <property type="evidence" value="ECO:0007669"/>
    <property type="project" value="UniProtKB-SubCell"/>
</dbReference>
<dbReference type="InterPro" id="IPR022382">
    <property type="entry name" value="Mycoplasma_peptidase_DUF31"/>
</dbReference>
<dbReference type="InterPro" id="IPR022381">
    <property type="entry name" value="Uncharacterised_MG067"/>
</dbReference>
<dbReference type="NCBIfam" id="NF045841">
    <property type="entry name" value="Ig_SerProt_MIP"/>
    <property type="match status" value="1"/>
</dbReference>
<dbReference type="Pfam" id="PF01732">
    <property type="entry name" value="Mycop_pep_DUF31"/>
    <property type="match status" value="1"/>
</dbReference>
<dbReference type="PRINTS" id="PR00840">
    <property type="entry name" value="Y06768FAMILY"/>
</dbReference>
<dbReference type="PROSITE" id="PS51257">
    <property type="entry name" value="PROKAR_LIPOPROTEIN"/>
    <property type="match status" value="1"/>
</dbReference>